<sequence>DGYTPRL</sequence>
<protein>
    <recommendedName>
        <fullName evidence="4">Pyrokinin-1</fullName>
        <shortName evidence="4">PK-1</shortName>
    </recommendedName>
    <alternativeName>
        <fullName evidence="1">YXPRL-amide</fullName>
    </alternativeName>
</protein>
<reference evidence="5" key="1">
    <citation type="journal article" date="2012" name="Syst. Biol.">
        <title>Peptidomics-based phylogeny and biogeography of Mantophasmatodea (Hexapoda).</title>
        <authorList>
            <person name="Predel R."/>
            <person name="Neupert S."/>
            <person name="Huetteroth W."/>
            <person name="Kahnt J."/>
            <person name="Waidelich D."/>
            <person name="Roth S."/>
        </authorList>
    </citation>
    <scope>PROTEIN SEQUENCE</scope>
    <scope>AMIDATION AT LEU-7</scope>
    <source>
        <tissue evidence="3">Corpora cardiaca</tissue>
    </source>
</reference>
<proteinExistence type="evidence at protein level"/>
<name>PPK1_PRAMA</name>
<comment type="function">
    <text evidence="1">Myoactive.</text>
</comment>
<comment type="subcellular location">
    <subcellularLocation>
        <location evidence="6">Secreted</location>
    </subcellularLocation>
</comment>
<comment type="similarity">
    <text evidence="2">Belongs to the pyrokinin family.</text>
</comment>
<keyword id="KW-0027">Amidation</keyword>
<keyword id="KW-0903">Direct protein sequencing</keyword>
<keyword id="KW-0527">Neuropeptide</keyword>
<keyword id="KW-0964">Secreted</keyword>
<dbReference type="GO" id="GO:0005576">
    <property type="term" value="C:extracellular region"/>
    <property type="evidence" value="ECO:0007669"/>
    <property type="project" value="UniProtKB-SubCell"/>
</dbReference>
<dbReference type="GO" id="GO:0007218">
    <property type="term" value="P:neuropeptide signaling pathway"/>
    <property type="evidence" value="ECO:0007669"/>
    <property type="project" value="UniProtKB-KW"/>
</dbReference>
<feature type="peptide" id="PRO_0000421581" description="Pyrokinin-1" evidence="3">
    <location>
        <begin position="1"/>
        <end position="7"/>
    </location>
</feature>
<feature type="modified residue" description="Leucine amide" evidence="3">
    <location>
        <position position="7"/>
    </location>
</feature>
<accession>B3A0G6</accession>
<organism>
    <name type="scientific">Praedatophasma maraisi</name>
    <name type="common">Gladiator</name>
    <name type="synonym">Heel-walker</name>
    <dbReference type="NCBI Taxonomy" id="409170"/>
    <lineage>
        <taxon>Eukaryota</taxon>
        <taxon>Metazoa</taxon>
        <taxon>Ecdysozoa</taxon>
        <taxon>Arthropoda</taxon>
        <taxon>Hexapoda</taxon>
        <taxon>Insecta</taxon>
        <taxon>Pterygota</taxon>
        <taxon>Neoptera</taxon>
        <taxon>Polyneoptera</taxon>
        <taxon>Mantophasmatodea</taxon>
        <taxon>Mantophasmatidae</taxon>
        <taxon>Praedatophasma</taxon>
    </lineage>
</organism>
<evidence type="ECO:0000250" key="1">
    <source>
        <dbReference type="UniProtKB" id="P82619"/>
    </source>
</evidence>
<evidence type="ECO:0000255" key="2"/>
<evidence type="ECO:0000269" key="3">
    <source>
    </source>
</evidence>
<evidence type="ECO:0000303" key="4">
    <source>
    </source>
</evidence>
<evidence type="ECO:0000305" key="5"/>
<evidence type="ECO:0000305" key="6">
    <source>
    </source>
</evidence>